<proteinExistence type="predicted"/>
<keyword id="KW-1185">Reference proteome</keyword>
<name>YGHW_SHIFL</name>
<reference key="1">
    <citation type="journal article" date="2002" name="Nucleic Acids Res.">
        <title>Genome sequence of Shigella flexneri 2a: insights into pathogenicity through comparison with genomes of Escherichia coli K12 and O157.</title>
        <authorList>
            <person name="Jin Q."/>
            <person name="Yuan Z."/>
            <person name="Xu J."/>
            <person name="Wang Y."/>
            <person name="Shen Y."/>
            <person name="Lu W."/>
            <person name="Wang J."/>
            <person name="Liu H."/>
            <person name="Yang J."/>
            <person name="Yang F."/>
            <person name="Zhang X."/>
            <person name="Zhang J."/>
            <person name="Yang G."/>
            <person name="Wu H."/>
            <person name="Qu D."/>
            <person name="Dong J."/>
            <person name="Sun L."/>
            <person name="Xue Y."/>
            <person name="Zhao A."/>
            <person name="Gao Y."/>
            <person name="Zhu J."/>
            <person name="Kan B."/>
            <person name="Ding K."/>
            <person name="Chen S."/>
            <person name="Cheng H."/>
            <person name="Yao Z."/>
            <person name="He B."/>
            <person name="Chen R."/>
            <person name="Ma D."/>
            <person name="Qiang B."/>
            <person name="Wen Y."/>
            <person name="Hou Y."/>
            <person name="Yu J."/>
        </authorList>
    </citation>
    <scope>NUCLEOTIDE SEQUENCE [LARGE SCALE GENOMIC DNA]</scope>
    <source>
        <strain>301 / Serotype 2a</strain>
    </source>
</reference>
<reference key="2">
    <citation type="journal article" date="2003" name="Infect. Immun.">
        <title>Complete genome sequence and comparative genomics of Shigella flexneri serotype 2a strain 2457T.</title>
        <authorList>
            <person name="Wei J."/>
            <person name="Goldberg M.B."/>
            <person name="Burland V."/>
            <person name="Venkatesan M.M."/>
            <person name="Deng W."/>
            <person name="Fournier G."/>
            <person name="Mayhew G.F."/>
            <person name="Plunkett G. III"/>
            <person name="Rose D.J."/>
            <person name="Darling A."/>
            <person name="Mau B."/>
            <person name="Perna N.T."/>
            <person name="Payne S.M."/>
            <person name="Runyen-Janecky L.J."/>
            <person name="Zhou S."/>
            <person name="Schwartz D.C."/>
            <person name="Blattner F.R."/>
        </authorList>
    </citation>
    <scope>NUCLEOTIDE SEQUENCE [LARGE SCALE GENOMIC DNA]</scope>
    <source>
        <strain>ATCC 700930 / 2457T / Serotype 2a</strain>
    </source>
</reference>
<dbReference type="EMBL" id="AE005674">
    <property type="protein sequence ID" value="AAN44523.1"/>
    <property type="molecule type" value="Genomic_DNA"/>
</dbReference>
<dbReference type="EMBL" id="AE014073">
    <property type="protein sequence ID" value="AAP18334.1"/>
    <property type="molecule type" value="Genomic_DNA"/>
</dbReference>
<dbReference type="RefSeq" id="NP_708816.1">
    <property type="nucleotide sequence ID" value="NC_004337.2"/>
</dbReference>
<dbReference type="RefSeq" id="WP_001059136.1">
    <property type="nucleotide sequence ID" value="NZ_WPGW01000034.1"/>
</dbReference>
<dbReference type="STRING" id="198214.SF3045"/>
<dbReference type="PaxDb" id="198214-SF3045"/>
<dbReference type="GeneID" id="1026642"/>
<dbReference type="GeneID" id="93778987"/>
<dbReference type="KEGG" id="sfl:SF3045"/>
<dbReference type="KEGG" id="sfx:S3246"/>
<dbReference type="PATRIC" id="fig|198214.7.peg.3619"/>
<dbReference type="HOGENOM" id="CLU_156478_0_0_6"/>
<dbReference type="Proteomes" id="UP000001006">
    <property type="component" value="Chromosome"/>
</dbReference>
<dbReference type="Proteomes" id="UP000002673">
    <property type="component" value="Chromosome"/>
</dbReference>
<dbReference type="InterPro" id="IPR022574">
    <property type="entry name" value="DUF2623"/>
</dbReference>
<dbReference type="Pfam" id="PF11115">
    <property type="entry name" value="DUF2623"/>
    <property type="match status" value="1"/>
</dbReference>
<feature type="chain" id="PRO_0000169397" description="Uncharacterized protein YghW">
    <location>
        <begin position="1"/>
        <end position="95"/>
    </location>
</feature>
<protein>
    <recommendedName>
        <fullName>Uncharacterized protein YghW</fullName>
    </recommendedName>
</protein>
<accession>P64577</accession>
<accession>Q46848</accession>
<organism>
    <name type="scientific">Shigella flexneri</name>
    <dbReference type="NCBI Taxonomy" id="623"/>
    <lineage>
        <taxon>Bacteria</taxon>
        <taxon>Pseudomonadati</taxon>
        <taxon>Pseudomonadota</taxon>
        <taxon>Gammaproteobacteria</taxon>
        <taxon>Enterobacterales</taxon>
        <taxon>Enterobacteriaceae</taxon>
        <taxon>Shigella</taxon>
    </lineage>
</organism>
<sequence>MNNHFGKGLMAGLKATHADSAVNVTKFCADYKRGFVLGYSHRMYEKTGDRQLSAWEAGILTRRYGLDKEMVMDFFRENNSCSTLRFFMAGYRLEN</sequence>
<gene>
    <name type="primary">yghW</name>
    <name type="ordered locus">SF3045</name>
    <name type="ordered locus">S3246</name>
</gene>